<keyword id="KW-0028">Amino-acid biosynthesis</keyword>
<keyword id="KW-0963">Cytoplasm</keyword>
<keyword id="KW-0413">Isomerase</keyword>
<keyword id="KW-0457">Lysine biosynthesis</keyword>
<keyword id="KW-1185">Reference proteome</keyword>
<name>DAPF_GLAP5</name>
<accession>B8F878</accession>
<proteinExistence type="inferred from homology"/>
<dbReference type="EC" id="5.1.1.7" evidence="1"/>
<dbReference type="EMBL" id="CP001321">
    <property type="protein sequence ID" value="ACL33530.1"/>
    <property type="molecule type" value="Genomic_DNA"/>
</dbReference>
<dbReference type="RefSeq" id="WP_005711427.1">
    <property type="nucleotide sequence ID" value="NC_011852.1"/>
</dbReference>
<dbReference type="SMR" id="B8F878"/>
<dbReference type="STRING" id="557723.HAPS_2073"/>
<dbReference type="GeneID" id="66619518"/>
<dbReference type="KEGG" id="hap:HAPS_2073"/>
<dbReference type="HOGENOM" id="CLU_053306_1_1_6"/>
<dbReference type="UniPathway" id="UPA00034">
    <property type="reaction ID" value="UER00025"/>
</dbReference>
<dbReference type="Proteomes" id="UP000006743">
    <property type="component" value="Chromosome"/>
</dbReference>
<dbReference type="GO" id="GO:0005829">
    <property type="term" value="C:cytosol"/>
    <property type="evidence" value="ECO:0007669"/>
    <property type="project" value="TreeGrafter"/>
</dbReference>
<dbReference type="GO" id="GO:0008837">
    <property type="term" value="F:diaminopimelate epimerase activity"/>
    <property type="evidence" value="ECO:0007669"/>
    <property type="project" value="UniProtKB-UniRule"/>
</dbReference>
<dbReference type="GO" id="GO:0009089">
    <property type="term" value="P:lysine biosynthetic process via diaminopimelate"/>
    <property type="evidence" value="ECO:0007669"/>
    <property type="project" value="UniProtKB-UniRule"/>
</dbReference>
<dbReference type="FunFam" id="3.10.310.10:FF:000001">
    <property type="entry name" value="Diaminopimelate epimerase"/>
    <property type="match status" value="1"/>
</dbReference>
<dbReference type="FunFam" id="3.10.310.10:FF:000002">
    <property type="entry name" value="Diaminopimelate epimerase"/>
    <property type="match status" value="1"/>
</dbReference>
<dbReference type="Gene3D" id="3.10.310.10">
    <property type="entry name" value="Diaminopimelate Epimerase, Chain A, domain 1"/>
    <property type="match status" value="2"/>
</dbReference>
<dbReference type="HAMAP" id="MF_00197">
    <property type="entry name" value="DAP_epimerase"/>
    <property type="match status" value="1"/>
</dbReference>
<dbReference type="InterPro" id="IPR018510">
    <property type="entry name" value="DAP_epimerase_AS"/>
</dbReference>
<dbReference type="InterPro" id="IPR001653">
    <property type="entry name" value="DAP_epimerase_DapF"/>
</dbReference>
<dbReference type="NCBIfam" id="TIGR00652">
    <property type="entry name" value="DapF"/>
    <property type="match status" value="1"/>
</dbReference>
<dbReference type="PANTHER" id="PTHR31689:SF0">
    <property type="entry name" value="DIAMINOPIMELATE EPIMERASE"/>
    <property type="match status" value="1"/>
</dbReference>
<dbReference type="PANTHER" id="PTHR31689">
    <property type="entry name" value="DIAMINOPIMELATE EPIMERASE, CHLOROPLASTIC"/>
    <property type="match status" value="1"/>
</dbReference>
<dbReference type="Pfam" id="PF01678">
    <property type="entry name" value="DAP_epimerase"/>
    <property type="match status" value="2"/>
</dbReference>
<dbReference type="SUPFAM" id="SSF54506">
    <property type="entry name" value="Diaminopimelate epimerase-like"/>
    <property type="match status" value="1"/>
</dbReference>
<dbReference type="PROSITE" id="PS01326">
    <property type="entry name" value="DAP_EPIMERASE"/>
    <property type="match status" value="1"/>
</dbReference>
<evidence type="ECO:0000255" key="1">
    <source>
        <dbReference type="HAMAP-Rule" id="MF_00197"/>
    </source>
</evidence>
<sequence length="274" mass="30279">MQFSKMHGLGNDFMVIDGVTQNVYLTEELIRKWADRHRGVGFDQLLLVEPPYDPELDFHYRIFNADGSEVSQCGNGARCFARFVTLKGLTNKQDIGVSTAKGKMVLSLQDDGQVRVNMGEPIWEPAQIPFTANKFEKNYILRTDIQTVLCGVVSMGNPHCVLQVENIQTANVNELGALLERHERFPERANIGFMQVINRNHIKLRVFERGAGETQACGSGACGAVAVGIMQGLLDSRVQVDLPGGTLHIEWQGVGSPLYMTGDAEHIYDGAVKS</sequence>
<reference key="1">
    <citation type="journal article" date="2009" name="J. Bacteriol.">
        <title>Complete genome sequence of Haemophilus parasuis SH0165.</title>
        <authorList>
            <person name="Yue M."/>
            <person name="Yang F."/>
            <person name="Yang J."/>
            <person name="Bei W."/>
            <person name="Cai X."/>
            <person name="Chen L."/>
            <person name="Dong J."/>
            <person name="Zhou R."/>
            <person name="Jin M."/>
            <person name="Jin Q."/>
            <person name="Chen H."/>
        </authorList>
    </citation>
    <scope>NUCLEOTIDE SEQUENCE [LARGE SCALE GENOMIC DNA]</scope>
    <source>
        <strain>SH0165</strain>
    </source>
</reference>
<feature type="chain" id="PRO_1000124416" description="Diaminopimelate epimerase">
    <location>
        <begin position="1"/>
        <end position="274"/>
    </location>
</feature>
<feature type="active site" description="Proton donor" evidence="1">
    <location>
        <position position="73"/>
    </location>
</feature>
<feature type="active site" description="Proton acceptor" evidence="1">
    <location>
        <position position="217"/>
    </location>
</feature>
<feature type="binding site" evidence="1">
    <location>
        <position position="11"/>
    </location>
    <ligand>
        <name>substrate</name>
    </ligand>
</feature>
<feature type="binding site" evidence="1">
    <location>
        <position position="44"/>
    </location>
    <ligand>
        <name>substrate</name>
    </ligand>
</feature>
<feature type="binding site" evidence="1">
    <location>
        <position position="64"/>
    </location>
    <ligand>
        <name>substrate</name>
    </ligand>
</feature>
<feature type="binding site" evidence="1">
    <location>
        <begin position="74"/>
        <end position="75"/>
    </location>
    <ligand>
        <name>substrate</name>
    </ligand>
</feature>
<feature type="binding site" evidence="1">
    <location>
        <position position="157"/>
    </location>
    <ligand>
        <name>substrate</name>
    </ligand>
</feature>
<feature type="binding site" evidence="1">
    <location>
        <position position="190"/>
    </location>
    <ligand>
        <name>substrate</name>
    </ligand>
</feature>
<feature type="binding site" evidence="1">
    <location>
        <begin position="208"/>
        <end position="209"/>
    </location>
    <ligand>
        <name>substrate</name>
    </ligand>
</feature>
<feature type="binding site" evidence="1">
    <location>
        <begin position="218"/>
        <end position="219"/>
    </location>
    <ligand>
        <name>substrate</name>
    </ligand>
</feature>
<feature type="site" description="Could be important to modulate the pK values of the two catalytic cysteine residues" evidence="1">
    <location>
        <position position="159"/>
    </location>
</feature>
<feature type="site" description="Could be important to modulate the pK values of the two catalytic cysteine residues" evidence="1">
    <location>
        <position position="208"/>
    </location>
</feature>
<feature type="site" description="Important for dimerization" evidence="1">
    <location>
        <position position="268"/>
    </location>
</feature>
<organism>
    <name type="scientific">Glaesserella parasuis serovar 5 (strain SH0165)</name>
    <name type="common">Haemophilus parasuis</name>
    <dbReference type="NCBI Taxonomy" id="557723"/>
    <lineage>
        <taxon>Bacteria</taxon>
        <taxon>Pseudomonadati</taxon>
        <taxon>Pseudomonadota</taxon>
        <taxon>Gammaproteobacteria</taxon>
        <taxon>Pasteurellales</taxon>
        <taxon>Pasteurellaceae</taxon>
        <taxon>Glaesserella</taxon>
    </lineage>
</organism>
<gene>
    <name evidence="1" type="primary">dapF</name>
    <name type="ordered locus">HAPS_2073</name>
</gene>
<comment type="function">
    <text evidence="1">Catalyzes the stereoinversion of LL-2,6-diaminopimelate (L,L-DAP) to meso-diaminopimelate (meso-DAP), a precursor of L-lysine and an essential component of the bacterial peptidoglycan.</text>
</comment>
<comment type="catalytic activity">
    <reaction evidence="1">
        <text>(2S,6S)-2,6-diaminopimelate = meso-2,6-diaminopimelate</text>
        <dbReference type="Rhea" id="RHEA:15393"/>
        <dbReference type="ChEBI" id="CHEBI:57609"/>
        <dbReference type="ChEBI" id="CHEBI:57791"/>
        <dbReference type="EC" id="5.1.1.7"/>
    </reaction>
</comment>
<comment type="pathway">
    <text evidence="1">Amino-acid biosynthesis; L-lysine biosynthesis via DAP pathway; DL-2,6-diaminopimelate from LL-2,6-diaminopimelate: step 1/1.</text>
</comment>
<comment type="subunit">
    <text evidence="1">Homodimer.</text>
</comment>
<comment type="subcellular location">
    <subcellularLocation>
        <location evidence="1">Cytoplasm</location>
    </subcellularLocation>
</comment>
<comment type="similarity">
    <text evidence="1">Belongs to the diaminopimelate epimerase family.</text>
</comment>
<protein>
    <recommendedName>
        <fullName evidence="1">Diaminopimelate epimerase</fullName>
        <shortName evidence="1">DAP epimerase</shortName>
        <ecNumber evidence="1">5.1.1.7</ecNumber>
    </recommendedName>
    <alternativeName>
        <fullName evidence="1">PLP-independent amino acid racemase</fullName>
    </alternativeName>
</protein>